<feature type="chain" id="PRO_0000402714" description="3-aminoacrylate deaminase RutC">
    <location>
        <begin position="1"/>
        <end position="129"/>
    </location>
</feature>
<accession>B8H1Q2</accession>
<keyword id="KW-0378">Hydrolase</keyword>
<keyword id="KW-1185">Reference proteome</keyword>
<proteinExistence type="inferred from homology"/>
<name>RUTC_CAUVN</name>
<dbReference type="EC" id="3.5.-.-" evidence="1"/>
<dbReference type="EMBL" id="CP001340">
    <property type="protein sequence ID" value="ACL96351.1"/>
    <property type="molecule type" value="Genomic_DNA"/>
</dbReference>
<dbReference type="RefSeq" id="WP_010920637.1">
    <property type="nucleotide sequence ID" value="NC_011916.1"/>
</dbReference>
<dbReference type="RefSeq" id="YP_002518259.1">
    <property type="nucleotide sequence ID" value="NC_011916.1"/>
</dbReference>
<dbReference type="SMR" id="B8H1Q2"/>
<dbReference type="GeneID" id="7331316"/>
<dbReference type="KEGG" id="ccs:CCNA_02886"/>
<dbReference type="PATRIC" id="fig|565050.3.peg.2816"/>
<dbReference type="HOGENOM" id="CLU_100715_7_3_5"/>
<dbReference type="OrthoDB" id="583118at2"/>
<dbReference type="PhylomeDB" id="B8H1Q2"/>
<dbReference type="Proteomes" id="UP000001364">
    <property type="component" value="Chromosome"/>
</dbReference>
<dbReference type="GO" id="GO:0005829">
    <property type="term" value="C:cytosol"/>
    <property type="evidence" value="ECO:0007669"/>
    <property type="project" value="TreeGrafter"/>
</dbReference>
<dbReference type="GO" id="GO:0019239">
    <property type="term" value="F:deaminase activity"/>
    <property type="evidence" value="ECO:0007669"/>
    <property type="project" value="TreeGrafter"/>
</dbReference>
<dbReference type="GO" id="GO:0019740">
    <property type="term" value="P:nitrogen utilization"/>
    <property type="evidence" value="ECO:0007669"/>
    <property type="project" value="UniProtKB-UniRule"/>
</dbReference>
<dbReference type="GO" id="GO:0006212">
    <property type="term" value="P:uracil catabolic process"/>
    <property type="evidence" value="ECO:0007669"/>
    <property type="project" value="UniProtKB-UniRule"/>
</dbReference>
<dbReference type="CDD" id="cd00448">
    <property type="entry name" value="YjgF_YER057c_UK114_family"/>
    <property type="match status" value="1"/>
</dbReference>
<dbReference type="Gene3D" id="3.30.1330.40">
    <property type="entry name" value="RutC-like"/>
    <property type="match status" value="1"/>
</dbReference>
<dbReference type="HAMAP" id="MF_00831">
    <property type="entry name" value="RutC"/>
    <property type="match status" value="1"/>
</dbReference>
<dbReference type="InterPro" id="IPR019898">
    <property type="entry name" value="RutC"/>
</dbReference>
<dbReference type="InterPro" id="IPR035959">
    <property type="entry name" value="RutC-like_sf"/>
</dbReference>
<dbReference type="InterPro" id="IPR006175">
    <property type="entry name" value="YjgF/YER057c/UK114"/>
</dbReference>
<dbReference type="NCBIfam" id="TIGR03610">
    <property type="entry name" value="RutC"/>
    <property type="match status" value="1"/>
</dbReference>
<dbReference type="PANTHER" id="PTHR11803">
    <property type="entry name" value="2-IMINOBUTANOATE/2-IMINOPROPANOATE DEAMINASE RIDA"/>
    <property type="match status" value="1"/>
</dbReference>
<dbReference type="PANTHER" id="PTHR11803:SF58">
    <property type="entry name" value="PROTEIN HMF1-RELATED"/>
    <property type="match status" value="1"/>
</dbReference>
<dbReference type="Pfam" id="PF01042">
    <property type="entry name" value="Ribonuc_L-PSP"/>
    <property type="match status" value="1"/>
</dbReference>
<dbReference type="SUPFAM" id="SSF55298">
    <property type="entry name" value="YjgF-like"/>
    <property type="match status" value="1"/>
</dbReference>
<reference key="1">
    <citation type="journal article" date="2010" name="J. Bacteriol.">
        <title>The genetic basis of laboratory adaptation in Caulobacter crescentus.</title>
        <authorList>
            <person name="Marks M.E."/>
            <person name="Castro-Rojas C.M."/>
            <person name="Teiling C."/>
            <person name="Du L."/>
            <person name="Kapatral V."/>
            <person name="Walunas T.L."/>
            <person name="Crosson S."/>
        </authorList>
    </citation>
    <scope>NUCLEOTIDE SEQUENCE [LARGE SCALE GENOMIC DNA]</scope>
    <source>
        <strain>NA1000 / CB15N</strain>
    </source>
</reference>
<organism>
    <name type="scientific">Caulobacter vibrioides (strain NA1000 / CB15N)</name>
    <name type="common">Caulobacter crescentus</name>
    <dbReference type="NCBI Taxonomy" id="565050"/>
    <lineage>
        <taxon>Bacteria</taxon>
        <taxon>Pseudomonadati</taxon>
        <taxon>Pseudomonadota</taxon>
        <taxon>Alphaproteobacteria</taxon>
        <taxon>Caulobacterales</taxon>
        <taxon>Caulobacteraceae</taxon>
        <taxon>Caulobacter</taxon>
    </lineage>
</organism>
<comment type="function">
    <text evidence="1">Involved in pyrimidine catabolism. Catalyzes the deamination of 3-aminoacrylate to malonic semialdehyde, a reaction that can also occur spontaneously. RutC may facilitate the reaction and modulate the metabolic fitness, rather than catalyzing essential functions.</text>
</comment>
<comment type="catalytic activity">
    <reaction evidence="1">
        <text>(Z)-3-aminoacrylate + H2O + H(+) = 3-oxopropanoate + NH4(+)</text>
        <dbReference type="Rhea" id="RHEA:34947"/>
        <dbReference type="ChEBI" id="CHEBI:15377"/>
        <dbReference type="ChEBI" id="CHEBI:15378"/>
        <dbReference type="ChEBI" id="CHEBI:28938"/>
        <dbReference type="ChEBI" id="CHEBI:33190"/>
        <dbReference type="ChEBI" id="CHEBI:59894"/>
    </reaction>
</comment>
<comment type="similarity">
    <text evidence="1">Belongs to the RutC family.</text>
</comment>
<sequence length="129" mass="13889">MPKTVITPPGTQTPIAPFSPGTLADGIVYVSGTLAFDKDNNVAFPGDAEAQTRQVLETIKSVIETAGGTMEDVTMNHIFLTDWVHYAPMNKVYAEYFPGDKPARYCIQCGLVKPGFVVEIASVAHIGKT</sequence>
<gene>
    <name evidence="1" type="primary">rutC</name>
    <name type="ordered locus">CCNA_02886</name>
</gene>
<protein>
    <recommendedName>
        <fullName evidence="1">3-aminoacrylate deaminase RutC</fullName>
        <shortName evidence="1">3-AA deaminase</shortName>
        <ecNumber evidence="1">3.5.-.-</ecNumber>
    </recommendedName>
</protein>
<evidence type="ECO:0000255" key="1">
    <source>
        <dbReference type="HAMAP-Rule" id="MF_00831"/>
    </source>
</evidence>